<accession>O52401</accession>
<accession>C5BAU4</accession>
<comment type="function">
    <text evidence="1">Mechanosensitive channel that participates in the regulation of osmotic pressure changes within the cell, opening in response to stretch forces in the membrane lipid bilayer, without the need for other proteins. Contributes to normal resistance to hypoosmotic shock. Forms an ion channel of 1.0 nanosiemens conductance with a slight preference for anions. The channel is sensitive to voltage; as the membrane is depolarized, less tension is required to open the channel and vice versa. The channel is characterized by short bursts of activity that last for a few seconds.</text>
</comment>
<comment type="subunit">
    <text evidence="1">Homoheptamer.</text>
</comment>
<comment type="subcellular location">
    <subcellularLocation>
        <location evidence="1">Cell inner membrane</location>
        <topology evidence="1">Multi-pass membrane protein</topology>
    </subcellularLocation>
</comment>
<comment type="similarity">
    <text evidence="2">Belongs to the MscS (TC 1.A.23) family.</text>
</comment>
<organism>
    <name type="scientific">Edwardsiella ictaluri (strain 93-146)</name>
    <dbReference type="NCBI Taxonomy" id="634503"/>
    <lineage>
        <taxon>Bacteria</taxon>
        <taxon>Pseudomonadati</taxon>
        <taxon>Pseudomonadota</taxon>
        <taxon>Gammaproteobacteria</taxon>
        <taxon>Enterobacterales</taxon>
        <taxon>Hafniaceae</taxon>
        <taxon>Edwardsiella</taxon>
    </lineage>
</organism>
<protein>
    <recommendedName>
        <fullName>Small-conductance mechanosensitive channel</fullName>
    </recommendedName>
</protein>
<reference key="1">
    <citation type="journal article" date="2002" name="Dis. Aquat. Organ.">
        <title>Cloning and characterization of Edwardsiella ictaluri proteins expressed and recognized by the channel catfish Ictalurus punctatus immune response during infection.</title>
        <authorList>
            <person name="Moore M.M."/>
            <person name="Fernandez D.L."/>
            <person name="Thune R.L."/>
        </authorList>
    </citation>
    <scope>NUCLEOTIDE SEQUENCE [GENOMIC DNA]</scope>
</reference>
<reference key="2">
    <citation type="submission" date="2009-03" db="EMBL/GenBank/DDBJ databases">
        <title>Complete genome sequence of Edwardsiella ictaluri 93-146.</title>
        <authorList>
            <person name="Williams M.L."/>
            <person name="Gillaspy A.F."/>
            <person name="Dyer D.W."/>
            <person name="Thune R.L."/>
            <person name="Waldbieser G.C."/>
            <person name="Schuster S.C."/>
            <person name="Gipson J."/>
            <person name="Zaitshik J."/>
            <person name="Landry C."/>
            <person name="Lawrence M.L."/>
        </authorList>
    </citation>
    <scope>NUCLEOTIDE SEQUENCE [LARGE SCALE GENOMIC DNA]</scope>
    <source>
        <strain>93-146</strain>
    </source>
</reference>
<keyword id="KW-0997">Cell inner membrane</keyword>
<keyword id="KW-1003">Cell membrane</keyword>
<keyword id="KW-0407">Ion channel</keyword>
<keyword id="KW-0406">Ion transport</keyword>
<keyword id="KW-0472">Membrane</keyword>
<keyword id="KW-0812">Transmembrane</keyword>
<keyword id="KW-1133">Transmembrane helix</keyword>
<keyword id="KW-0813">Transport</keyword>
<dbReference type="EMBL" id="AF037440">
    <property type="protein sequence ID" value="AAB92571.1"/>
    <property type="molecule type" value="Genomic_DNA"/>
</dbReference>
<dbReference type="EMBL" id="CP001600">
    <property type="protein sequence ID" value="ACR70503.1"/>
    <property type="molecule type" value="Genomic_DNA"/>
</dbReference>
<dbReference type="RefSeq" id="WP_015872576.1">
    <property type="nucleotide sequence ID" value="NZ_CP169062.1"/>
</dbReference>
<dbReference type="SMR" id="O52401"/>
<dbReference type="STRING" id="67780.B6E78_08515"/>
<dbReference type="GeneID" id="69540221"/>
<dbReference type="KEGG" id="eic:NT01EI_3366"/>
<dbReference type="PATRIC" id="fig|634503.3.peg.2992"/>
<dbReference type="HOGENOM" id="CLU_037945_1_1_6"/>
<dbReference type="OrthoDB" id="9809206at2"/>
<dbReference type="Proteomes" id="UP000001485">
    <property type="component" value="Chromosome"/>
</dbReference>
<dbReference type="GO" id="GO:0005886">
    <property type="term" value="C:plasma membrane"/>
    <property type="evidence" value="ECO:0007669"/>
    <property type="project" value="UniProtKB-SubCell"/>
</dbReference>
<dbReference type="GO" id="GO:0008381">
    <property type="term" value="F:mechanosensitive monoatomic ion channel activity"/>
    <property type="evidence" value="ECO:0007669"/>
    <property type="project" value="InterPro"/>
</dbReference>
<dbReference type="FunFam" id="2.30.30.60:FF:000001">
    <property type="entry name" value="MscS Mechanosensitive ion channel"/>
    <property type="match status" value="1"/>
</dbReference>
<dbReference type="Gene3D" id="1.10.287.1260">
    <property type="match status" value="1"/>
</dbReference>
<dbReference type="Gene3D" id="2.30.30.60">
    <property type="match status" value="1"/>
</dbReference>
<dbReference type="Gene3D" id="3.30.70.100">
    <property type="match status" value="1"/>
</dbReference>
<dbReference type="InterPro" id="IPR010920">
    <property type="entry name" value="LSM_dom_sf"/>
</dbReference>
<dbReference type="InterPro" id="IPR049142">
    <property type="entry name" value="MS_channel_1st"/>
</dbReference>
<dbReference type="InterPro" id="IPR049278">
    <property type="entry name" value="MS_channel_C"/>
</dbReference>
<dbReference type="InterPro" id="IPR008910">
    <property type="entry name" value="MSC_TM_helix"/>
</dbReference>
<dbReference type="InterPro" id="IPR045275">
    <property type="entry name" value="MscS_archaea/bacteria_type"/>
</dbReference>
<dbReference type="InterPro" id="IPR023408">
    <property type="entry name" value="MscS_beta-dom_sf"/>
</dbReference>
<dbReference type="InterPro" id="IPR006685">
    <property type="entry name" value="MscS_channel_2nd"/>
</dbReference>
<dbReference type="InterPro" id="IPR011066">
    <property type="entry name" value="MscS_channel_C_sf"/>
</dbReference>
<dbReference type="InterPro" id="IPR006686">
    <property type="entry name" value="MscS_channel_CS"/>
</dbReference>
<dbReference type="InterPro" id="IPR011014">
    <property type="entry name" value="MscS_channel_TM-2"/>
</dbReference>
<dbReference type="NCBIfam" id="NF007662">
    <property type="entry name" value="PRK10334.1"/>
    <property type="match status" value="1"/>
</dbReference>
<dbReference type="PANTHER" id="PTHR30221">
    <property type="entry name" value="SMALL-CONDUCTANCE MECHANOSENSITIVE CHANNEL"/>
    <property type="match status" value="1"/>
</dbReference>
<dbReference type="PANTHER" id="PTHR30221:SF1">
    <property type="entry name" value="SMALL-CONDUCTANCE MECHANOSENSITIVE CHANNEL"/>
    <property type="match status" value="1"/>
</dbReference>
<dbReference type="Pfam" id="PF21088">
    <property type="entry name" value="MS_channel_1st"/>
    <property type="match status" value="1"/>
</dbReference>
<dbReference type="Pfam" id="PF05552">
    <property type="entry name" value="MS_channel_1st_1"/>
    <property type="match status" value="1"/>
</dbReference>
<dbReference type="Pfam" id="PF00924">
    <property type="entry name" value="MS_channel_2nd"/>
    <property type="match status" value="1"/>
</dbReference>
<dbReference type="Pfam" id="PF21082">
    <property type="entry name" value="MS_channel_3rd"/>
    <property type="match status" value="1"/>
</dbReference>
<dbReference type="SUPFAM" id="SSF82689">
    <property type="entry name" value="Mechanosensitive channel protein MscS (YggB), C-terminal domain"/>
    <property type="match status" value="1"/>
</dbReference>
<dbReference type="SUPFAM" id="SSF82861">
    <property type="entry name" value="Mechanosensitive channel protein MscS (YggB), transmembrane region"/>
    <property type="match status" value="1"/>
</dbReference>
<dbReference type="SUPFAM" id="SSF50182">
    <property type="entry name" value="Sm-like ribonucleoproteins"/>
    <property type="match status" value="1"/>
</dbReference>
<dbReference type="PROSITE" id="PS01246">
    <property type="entry name" value="UPF0003"/>
    <property type="match status" value="1"/>
</dbReference>
<proteinExistence type="inferred from homology"/>
<gene>
    <name type="primary">mscS</name>
    <name type="ordered locus">NT01EI_3366</name>
</gene>
<feature type="chain" id="PRO_0000110237" description="Small-conductance mechanosensitive channel">
    <location>
        <begin position="1"/>
        <end position="286"/>
    </location>
</feature>
<feature type="topological domain" description="Periplasmic" evidence="1">
    <location>
        <begin position="1"/>
        <end position="30"/>
    </location>
</feature>
<feature type="transmembrane region" description="Helical" evidence="1">
    <location>
        <begin position="31"/>
        <end position="52"/>
    </location>
</feature>
<feature type="topological domain" description="Cytoplasmic" evidence="1">
    <location>
        <begin position="53"/>
        <end position="67"/>
    </location>
</feature>
<feature type="transmembrane region" description="Helical" evidence="1">
    <location>
        <begin position="68"/>
        <end position="88"/>
    </location>
</feature>
<feature type="topological domain" description="Periplasmic" evidence="1">
    <location>
        <begin position="89"/>
        <end position="90"/>
    </location>
</feature>
<feature type="transmembrane region" description="Helical" evidence="1">
    <location>
        <begin position="91"/>
        <end position="111"/>
    </location>
</feature>
<feature type="topological domain" description="Cytoplasmic" evidence="1">
    <location>
        <begin position="112"/>
        <end position="286"/>
    </location>
</feature>
<sequence length="286" mass="30648">MKELDVVDGIQSAGGWIVRNQDLLLGYAVNLVAAVVILIIGSLIARGISTTLIRLLKARGLDVTVVHFLAAMVRYAILAFTIIAALGRLGVQTTSVIAVLGAAGLAVGLALQGSLSNFAAGVLLVLFRPFRAGEVVDLGGVTGTVREVQIFSTTLATADNKVIVVPNGKIIAGNIINFSREPKRRIDIIVGVAYDADIDVVKRVLGDVVAADTRILHDDGVTIRLNEMAASSLNFVVRVWGNNADYWAIYFDLMENFKRALDANNIGIPFPQMDVHLYQAVKARAE</sequence>
<name>MSCS_EDWI9</name>
<evidence type="ECO:0000250" key="1">
    <source>
        <dbReference type="UniProtKB" id="P0C0S1"/>
    </source>
</evidence>
<evidence type="ECO:0000305" key="2"/>